<organism>
    <name type="scientific">Hapsidospora irregularis</name>
    <dbReference type="NCBI Taxonomy" id="95324"/>
    <lineage>
        <taxon>Eukaryota</taxon>
        <taxon>Fungi</taxon>
        <taxon>Dikarya</taxon>
        <taxon>Ascomycota</taxon>
        <taxon>Pezizomycotina</taxon>
        <taxon>Sordariomycetes</taxon>
        <taxon>Hypocreomycetidae</taxon>
        <taxon>Hypocreales</taxon>
        <taxon>Bionectriaceae</taxon>
        <taxon>Hapsidospora</taxon>
    </lineage>
</organism>
<reference key="1">
    <citation type="journal article" date="2015" name="Org. Lett.">
        <title>Biosynthesis of the tetramic acids Sch210971 and Sch210972.</title>
        <authorList>
            <person name="Kakule T.B."/>
            <person name="Zhang S."/>
            <person name="Zhan J."/>
            <person name="Schmidt E.W."/>
        </authorList>
    </citation>
    <scope>NUCLEOTIDE SEQUENCE [GENOMIC DNA]</scope>
    <scope>FUNCTION</scope>
    <scope>CATALYTIC ACTIVITY</scope>
    <scope>PATHWAY</scope>
</reference>
<accession>A0A0F7GG11</accession>
<protein>
    <recommendedName>
        <fullName evidence="3">4-hydroxy-4-methyl-2-oxoglutarate aldolase tasA</fullName>
        <ecNumber evidence="2">4.1.3.17</ecNumber>
    </recommendedName>
    <alternativeName>
        <fullName evidence="3">Tetramic acid Sch210971/2 biosynthesis cluster protein A</fullName>
    </alternativeName>
</protein>
<feature type="chain" id="PRO_0000453346" description="4-hydroxy-4-methyl-2-oxoglutarate aldolase tasA">
    <location>
        <begin position="1"/>
        <end position="270"/>
    </location>
</feature>
<feature type="active site" description="Proton acceptor" evidence="1">
    <location>
        <position position="49"/>
    </location>
</feature>
<feature type="binding site" evidence="1">
    <location>
        <position position="156"/>
    </location>
    <ligand>
        <name>a divalent metal cation</name>
        <dbReference type="ChEBI" id="CHEBI:60240"/>
    </ligand>
</feature>
<feature type="binding site" evidence="1">
    <location>
        <position position="182"/>
    </location>
    <ligand>
        <name>a divalent metal cation</name>
        <dbReference type="ChEBI" id="CHEBI:60240"/>
    </ligand>
</feature>
<feature type="binding site" evidence="1">
    <location>
        <position position="182"/>
    </location>
    <ligand>
        <name>substrate</name>
    </ligand>
</feature>
<feature type="site" description="Transition state stabilizer" evidence="1">
    <location>
        <position position="74"/>
    </location>
</feature>
<feature type="site" description="Increases basicity of active site His" evidence="1">
    <location>
        <position position="89"/>
    </location>
</feature>
<evidence type="ECO:0000250" key="1">
    <source>
        <dbReference type="UniProtKB" id="Q47098"/>
    </source>
</evidence>
<evidence type="ECO:0000269" key="2">
    <source>
    </source>
</evidence>
<evidence type="ECO:0000303" key="3">
    <source>
    </source>
</evidence>
<evidence type="ECO:0000305" key="4"/>
<sequence length="270" mass="28621">MVAYENVLANKASSGRLCKALGIRLVTNPLVVQLAKNAGFDALFIDLEHSTLSLADASAIACAGLLSGLTPFVRVPYQCGMGFVQQVLDGGAMGIIFPHVHTAADARAAVDTCKFPPHGRRSMWGQQPVLGLRVTPLHKIAEVCDRVASSVVVMIEAADSIEQADAIAAVEGVDVLLVGCIDLSTDMGIAGNFESKRFRAALEAVSAACHRHGKLMGLAGLYNNRKLQEWAVHSLRARFILCQQDSNLLALGAMECAGAVASIQLDRCPD</sequence>
<name>TASA_HAPIR</name>
<keyword id="KW-0170">Cobalt</keyword>
<keyword id="KW-0408">Iron</keyword>
<keyword id="KW-0456">Lyase</keyword>
<keyword id="KW-0460">Magnesium</keyword>
<keyword id="KW-0464">Manganese</keyword>
<keyword id="KW-0479">Metal-binding</keyword>
<keyword id="KW-0862">Zinc</keyword>
<proteinExistence type="evidence at protein level"/>
<gene>
    <name evidence="3" type="primary">tasA</name>
</gene>
<dbReference type="EC" id="4.1.3.17" evidence="2"/>
<dbReference type="EMBL" id="KP835202">
    <property type="protein sequence ID" value="AKG54861.1"/>
    <property type="molecule type" value="Genomic_DNA"/>
</dbReference>
<dbReference type="SMR" id="A0A0F7GG11"/>
<dbReference type="GO" id="GO:0005737">
    <property type="term" value="C:cytoplasm"/>
    <property type="evidence" value="ECO:0007669"/>
    <property type="project" value="TreeGrafter"/>
</dbReference>
<dbReference type="GO" id="GO:0016832">
    <property type="term" value="F:aldehyde-lyase activity"/>
    <property type="evidence" value="ECO:0007669"/>
    <property type="project" value="TreeGrafter"/>
</dbReference>
<dbReference type="GO" id="GO:0046872">
    <property type="term" value="F:metal ion binding"/>
    <property type="evidence" value="ECO:0007669"/>
    <property type="project" value="UniProtKB-KW"/>
</dbReference>
<dbReference type="Gene3D" id="3.20.20.60">
    <property type="entry name" value="Phosphoenolpyruvate-binding domains"/>
    <property type="match status" value="1"/>
</dbReference>
<dbReference type="InterPro" id="IPR005000">
    <property type="entry name" value="Aldolase/citrate-lyase_domain"/>
</dbReference>
<dbReference type="InterPro" id="IPR050251">
    <property type="entry name" value="HpcH-HpaI_aldolase"/>
</dbReference>
<dbReference type="InterPro" id="IPR015813">
    <property type="entry name" value="Pyrv/PenolPyrv_kinase-like_dom"/>
</dbReference>
<dbReference type="InterPro" id="IPR040442">
    <property type="entry name" value="Pyrv_kinase-like_dom_sf"/>
</dbReference>
<dbReference type="PANTHER" id="PTHR30502">
    <property type="entry name" value="2-KETO-3-DEOXY-L-RHAMNONATE ALDOLASE"/>
    <property type="match status" value="1"/>
</dbReference>
<dbReference type="PANTHER" id="PTHR30502:SF0">
    <property type="entry name" value="PHOSPHOENOLPYRUVATE CARBOXYLASE FAMILY PROTEIN"/>
    <property type="match status" value="1"/>
</dbReference>
<dbReference type="Pfam" id="PF03328">
    <property type="entry name" value="HpcH_HpaI"/>
    <property type="match status" value="1"/>
</dbReference>
<dbReference type="SUPFAM" id="SSF51621">
    <property type="entry name" value="Phosphoenolpyruvate/pyruvate domain"/>
    <property type="match status" value="1"/>
</dbReference>
<comment type="function">
    <text evidence="2">4-hydroxy-4-methyl-2-oxoglutarate aldolase; part of the gene cluster that mediates the biosynthesis of the tetramic acids Sch210971 and Sch210972, potential anti-HIV fungal natural product that contain a decalin core (PubMed:25885659). The PKS module of tasS together with the enoylreductase tasC catalyze the formation of the polyketide unit which is then conjugated to 4-hydroxyl-4-methyl glutamate (HMG) by the condensation domain of the tasS NRPS module (PubMed:25885659). One unique structural feature of Sch210971 and Sch210972 is the tetramic acid motif proposed to be derived from the non-proteinogenic amino acid HMG, by a Dieckmann-type condensation catalyzed by the reductase domain of tasS (PubMed:25885659). The aldolase tasA catalyzes the aldol condensation of 2 molecules of pyruvic acid to yield the intermediate 4-hydroxyl-4-methyl-2-oxoglutarate (HMOG), which can then be stereoselectively transaminated, may be by tasG, to form HMG (PubMed:25885659). The Diels-Alderase tas3 then uses the Dieckmann product of tasS as substrate and catalyzes the Diels-Alder cycloaddition to form the decalin ring of Sch210971 and Sch210972 (PubMed:25885659).</text>
</comment>
<comment type="catalytic activity">
    <reaction evidence="2">
        <text>4-hydroxy-4-methyl-2-oxoglutarate = 2 pyruvate</text>
        <dbReference type="Rhea" id="RHEA:22748"/>
        <dbReference type="ChEBI" id="CHEBI:15361"/>
        <dbReference type="ChEBI" id="CHEBI:58276"/>
        <dbReference type="EC" id="4.1.3.17"/>
    </reaction>
    <physiologicalReaction direction="right-to-left" evidence="2">
        <dbReference type="Rhea" id="RHEA:22750"/>
    </physiologicalReaction>
</comment>
<comment type="cofactor">
    <cofactor evidence="1">
        <name>Co(2+)</name>
        <dbReference type="ChEBI" id="CHEBI:48828"/>
    </cofactor>
    <cofactor evidence="1">
        <name>Mn(2+)</name>
        <dbReference type="ChEBI" id="CHEBI:29035"/>
    </cofactor>
    <cofactor evidence="1">
        <name>Zn(2+)</name>
        <dbReference type="ChEBI" id="CHEBI:29105"/>
    </cofactor>
    <cofactor evidence="1">
        <name>Fe(2+)</name>
        <dbReference type="ChEBI" id="CHEBI:29033"/>
    </cofactor>
    <cofactor evidence="1">
        <name>Mg(2+)</name>
        <dbReference type="ChEBI" id="CHEBI:18420"/>
    </cofactor>
    <text evidence="1">Binds 1 divalent metal cation per subunit.</text>
</comment>
<comment type="pathway">
    <text evidence="2">Secondary metabolite biosynthesis.</text>
</comment>
<comment type="subunit">
    <text evidence="1">Homohexamer; trimer of dimers.</text>
</comment>
<comment type="similarity">
    <text evidence="4">Belongs to the HpcH/HpaI aldolase family.</text>
</comment>